<feature type="chain" id="PRO_1000067660" description="Large ribosomal subunit protein uL15">
    <location>
        <begin position="1"/>
        <end position="147"/>
    </location>
</feature>
<feature type="region of interest" description="Disordered" evidence="2">
    <location>
        <begin position="1"/>
        <end position="54"/>
    </location>
</feature>
<feature type="compositionally biased region" description="Basic and acidic residues" evidence="2">
    <location>
        <begin position="1"/>
        <end position="14"/>
    </location>
</feature>
<feature type="compositionally biased region" description="Gly residues" evidence="2">
    <location>
        <begin position="23"/>
        <end position="35"/>
    </location>
</feature>
<feature type="compositionally biased region" description="Gly residues" evidence="2">
    <location>
        <begin position="42"/>
        <end position="52"/>
    </location>
</feature>
<reference key="1">
    <citation type="submission" date="2007-10" db="EMBL/GenBank/DDBJ databases">
        <title>Complete genome of Alkaliphilus oremlandii OhILAs.</title>
        <authorList>
            <person name="Copeland A."/>
            <person name="Lucas S."/>
            <person name="Lapidus A."/>
            <person name="Barry K."/>
            <person name="Detter J.C."/>
            <person name="Glavina del Rio T."/>
            <person name="Hammon N."/>
            <person name="Israni S."/>
            <person name="Dalin E."/>
            <person name="Tice H."/>
            <person name="Pitluck S."/>
            <person name="Chain P."/>
            <person name="Malfatti S."/>
            <person name="Shin M."/>
            <person name="Vergez L."/>
            <person name="Schmutz J."/>
            <person name="Larimer F."/>
            <person name="Land M."/>
            <person name="Hauser L."/>
            <person name="Kyrpides N."/>
            <person name="Mikhailova N."/>
            <person name="Stolz J.F."/>
            <person name="Dawson A."/>
            <person name="Fisher E."/>
            <person name="Crable B."/>
            <person name="Perera E."/>
            <person name="Lisak J."/>
            <person name="Ranganathan M."/>
            <person name="Basu P."/>
            <person name="Richardson P."/>
        </authorList>
    </citation>
    <scope>NUCLEOTIDE SEQUENCE [LARGE SCALE GENOMIC DNA]</scope>
    <source>
        <strain>OhILAs</strain>
    </source>
</reference>
<name>RL15_ALKOO</name>
<dbReference type="EMBL" id="CP000853">
    <property type="protein sequence ID" value="ABW18073.1"/>
    <property type="molecule type" value="Genomic_DNA"/>
</dbReference>
<dbReference type="RefSeq" id="WP_012158387.1">
    <property type="nucleotide sequence ID" value="NC_009922.1"/>
</dbReference>
<dbReference type="SMR" id="A8MLF9"/>
<dbReference type="STRING" id="350688.Clos_0511"/>
<dbReference type="KEGG" id="aoe:Clos_0511"/>
<dbReference type="eggNOG" id="COG0200">
    <property type="taxonomic scope" value="Bacteria"/>
</dbReference>
<dbReference type="HOGENOM" id="CLU_055188_4_2_9"/>
<dbReference type="OrthoDB" id="9810293at2"/>
<dbReference type="Proteomes" id="UP000000269">
    <property type="component" value="Chromosome"/>
</dbReference>
<dbReference type="GO" id="GO:0022625">
    <property type="term" value="C:cytosolic large ribosomal subunit"/>
    <property type="evidence" value="ECO:0007669"/>
    <property type="project" value="TreeGrafter"/>
</dbReference>
<dbReference type="GO" id="GO:0019843">
    <property type="term" value="F:rRNA binding"/>
    <property type="evidence" value="ECO:0007669"/>
    <property type="project" value="UniProtKB-UniRule"/>
</dbReference>
<dbReference type="GO" id="GO:0003735">
    <property type="term" value="F:structural constituent of ribosome"/>
    <property type="evidence" value="ECO:0007669"/>
    <property type="project" value="InterPro"/>
</dbReference>
<dbReference type="GO" id="GO:0006412">
    <property type="term" value="P:translation"/>
    <property type="evidence" value="ECO:0007669"/>
    <property type="project" value="UniProtKB-UniRule"/>
</dbReference>
<dbReference type="Gene3D" id="3.100.10.10">
    <property type="match status" value="1"/>
</dbReference>
<dbReference type="HAMAP" id="MF_01341">
    <property type="entry name" value="Ribosomal_uL15"/>
    <property type="match status" value="1"/>
</dbReference>
<dbReference type="InterPro" id="IPR030878">
    <property type="entry name" value="Ribosomal_uL15"/>
</dbReference>
<dbReference type="InterPro" id="IPR021131">
    <property type="entry name" value="Ribosomal_uL15/eL18"/>
</dbReference>
<dbReference type="InterPro" id="IPR036227">
    <property type="entry name" value="Ribosomal_uL15/eL18_sf"/>
</dbReference>
<dbReference type="InterPro" id="IPR005749">
    <property type="entry name" value="Ribosomal_uL15_bac-type"/>
</dbReference>
<dbReference type="InterPro" id="IPR001196">
    <property type="entry name" value="Ribosomal_uL15_CS"/>
</dbReference>
<dbReference type="NCBIfam" id="TIGR01071">
    <property type="entry name" value="rplO_bact"/>
    <property type="match status" value="1"/>
</dbReference>
<dbReference type="PANTHER" id="PTHR12934">
    <property type="entry name" value="50S RIBOSOMAL PROTEIN L15"/>
    <property type="match status" value="1"/>
</dbReference>
<dbReference type="PANTHER" id="PTHR12934:SF11">
    <property type="entry name" value="LARGE RIBOSOMAL SUBUNIT PROTEIN UL15M"/>
    <property type="match status" value="1"/>
</dbReference>
<dbReference type="Pfam" id="PF00828">
    <property type="entry name" value="Ribosomal_L27A"/>
    <property type="match status" value="1"/>
</dbReference>
<dbReference type="SUPFAM" id="SSF52080">
    <property type="entry name" value="Ribosomal proteins L15p and L18e"/>
    <property type="match status" value="1"/>
</dbReference>
<dbReference type="PROSITE" id="PS00475">
    <property type="entry name" value="RIBOSOMAL_L15"/>
    <property type="match status" value="1"/>
</dbReference>
<sequence>MKLHELRPAEGAVRDRKRKGRGTASGLGKTAGRGSNGQKARSGGGVRPGFEGGQMPLYRRLPKRGFTNIFANVYNEINIDRLNAFENGTVVTAELLKETGVIKKIEKDGIKILGNGNLEKSLTVQAQKFTKSAIEKIEAAGGKAEVM</sequence>
<organism>
    <name type="scientific">Alkaliphilus oremlandii (strain OhILAs)</name>
    <name type="common">Clostridium oremlandii (strain OhILAs)</name>
    <dbReference type="NCBI Taxonomy" id="350688"/>
    <lineage>
        <taxon>Bacteria</taxon>
        <taxon>Bacillati</taxon>
        <taxon>Bacillota</taxon>
        <taxon>Clostridia</taxon>
        <taxon>Peptostreptococcales</taxon>
        <taxon>Natronincolaceae</taxon>
        <taxon>Alkaliphilus</taxon>
    </lineage>
</organism>
<protein>
    <recommendedName>
        <fullName evidence="1">Large ribosomal subunit protein uL15</fullName>
    </recommendedName>
    <alternativeName>
        <fullName evidence="3">50S ribosomal protein L15</fullName>
    </alternativeName>
</protein>
<gene>
    <name evidence="1" type="primary">rplO</name>
    <name type="ordered locus">Clos_0511</name>
</gene>
<evidence type="ECO:0000255" key="1">
    <source>
        <dbReference type="HAMAP-Rule" id="MF_01341"/>
    </source>
</evidence>
<evidence type="ECO:0000256" key="2">
    <source>
        <dbReference type="SAM" id="MobiDB-lite"/>
    </source>
</evidence>
<evidence type="ECO:0000305" key="3"/>
<keyword id="KW-1185">Reference proteome</keyword>
<keyword id="KW-0687">Ribonucleoprotein</keyword>
<keyword id="KW-0689">Ribosomal protein</keyword>
<keyword id="KW-0694">RNA-binding</keyword>
<keyword id="KW-0699">rRNA-binding</keyword>
<accession>A8MLF9</accession>
<proteinExistence type="inferred from homology"/>
<comment type="function">
    <text evidence="1">Binds to the 23S rRNA.</text>
</comment>
<comment type="subunit">
    <text evidence="1">Part of the 50S ribosomal subunit.</text>
</comment>
<comment type="similarity">
    <text evidence="1">Belongs to the universal ribosomal protein uL15 family.</text>
</comment>